<proteinExistence type="inferred from homology"/>
<dbReference type="EMBL" id="CP001072">
    <property type="protein sequence ID" value="ACD47867.1"/>
    <property type="molecule type" value="Genomic_DNA"/>
</dbReference>
<dbReference type="RefSeq" id="WP_000991193.1">
    <property type="nucleotide sequence ID" value="NC_010698.2"/>
</dbReference>
<dbReference type="SMR" id="B2USN5"/>
<dbReference type="KEGG" id="hps:HPSH_02085"/>
<dbReference type="HOGENOM" id="CLU_089475_6_5_7"/>
<dbReference type="GO" id="GO:0005737">
    <property type="term" value="C:cytoplasm"/>
    <property type="evidence" value="ECO:0007669"/>
    <property type="project" value="UniProtKB-SubCell"/>
</dbReference>
<dbReference type="GO" id="GO:0030490">
    <property type="term" value="P:maturation of SSU-rRNA"/>
    <property type="evidence" value="ECO:0007669"/>
    <property type="project" value="UniProtKB-UniRule"/>
</dbReference>
<dbReference type="Gene3D" id="3.30.300.20">
    <property type="match status" value="1"/>
</dbReference>
<dbReference type="HAMAP" id="MF_00003">
    <property type="entry name" value="RbfA"/>
    <property type="match status" value="1"/>
</dbReference>
<dbReference type="InterPro" id="IPR015946">
    <property type="entry name" value="KH_dom-like_a/b"/>
</dbReference>
<dbReference type="InterPro" id="IPR000238">
    <property type="entry name" value="RbfA"/>
</dbReference>
<dbReference type="InterPro" id="IPR023799">
    <property type="entry name" value="RbfA_dom_sf"/>
</dbReference>
<dbReference type="InterPro" id="IPR020053">
    <property type="entry name" value="Ribosome-bd_factorA_CS"/>
</dbReference>
<dbReference type="NCBIfam" id="TIGR00082">
    <property type="entry name" value="rbfA"/>
    <property type="match status" value="1"/>
</dbReference>
<dbReference type="Pfam" id="PF02033">
    <property type="entry name" value="RBFA"/>
    <property type="match status" value="1"/>
</dbReference>
<dbReference type="SUPFAM" id="SSF89919">
    <property type="entry name" value="Ribosome-binding factor A, RbfA"/>
    <property type="match status" value="1"/>
</dbReference>
<dbReference type="PROSITE" id="PS01319">
    <property type="entry name" value="RBFA"/>
    <property type="match status" value="1"/>
</dbReference>
<gene>
    <name evidence="1" type="primary">rbfA</name>
    <name type="ordered locus">HPSH_02085</name>
</gene>
<comment type="function">
    <text evidence="1">One of several proteins that assist in the late maturation steps of the functional core of the 30S ribosomal subunit. Associates with free 30S ribosomal subunits (but not with 30S subunits that are part of 70S ribosomes or polysomes). Required for efficient processing of 16S rRNA. May interact with the 5'-terminal helix region of 16S rRNA.</text>
</comment>
<comment type="subunit">
    <text evidence="1">Monomer. Binds 30S ribosomal subunits, but not 50S ribosomal subunits or 70S ribosomes.</text>
</comment>
<comment type="subcellular location">
    <subcellularLocation>
        <location evidence="1">Cytoplasm</location>
    </subcellularLocation>
</comment>
<comment type="similarity">
    <text evidence="1">Belongs to the RbfA family.</text>
</comment>
<keyword id="KW-0963">Cytoplasm</keyword>
<keyword id="KW-0690">Ribosome biogenesis</keyword>
<organism>
    <name type="scientific">Helicobacter pylori (strain Shi470)</name>
    <dbReference type="NCBI Taxonomy" id="512562"/>
    <lineage>
        <taxon>Bacteria</taxon>
        <taxon>Pseudomonadati</taxon>
        <taxon>Campylobacterota</taxon>
        <taxon>Epsilonproteobacteria</taxon>
        <taxon>Campylobacterales</taxon>
        <taxon>Helicobacteraceae</taxon>
        <taxon>Helicobacter</taxon>
    </lineage>
</organism>
<reference key="1">
    <citation type="submission" date="2008-05" db="EMBL/GenBank/DDBJ databases">
        <title>Genome sequence of Helicobacter pylori from the remote Amazon: traces of Asian ancestry of the first Americans.</title>
        <authorList>
            <person name="Kersulyte D."/>
            <person name="Kalia A."/>
            <person name="Gilman R.H."/>
            <person name="Berg D.E."/>
        </authorList>
    </citation>
    <scope>NUCLEOTIDE SEQUENCE [LARGE SCALE GENOMIC DNA]</scope>
    <source>
        <strain>Shi470</strain>
    </source>
</reference>
<accession>B2USN5</accession>
<sequence length="111" mass="12578">MNAHKERLESNLLELLQEALASLNDSELNSLSVTRVECSKGKHHAFVFVLSQDHKILSKLKKAEGLIRQFVLQASGWFKCPKLSFVLDNSLEKQLRLDAIFNEIAKGKDND</sequence>
<evidence type="ECO:0000255" key="1">
    <source>
        <dbReference type="HAMAP-Rule" id="MF_00003"/>
    </source>
</evidence>
<feature type="chain" id="PRO_1000088895" description="Ribosome-binding factor A">
    <location>
        <begin position="1"/>
        <end position="111"/>
    </location>
</feature>
<protein>
    <recommendedName>
        <fullName evidence="1">Ribosome-binding factor A</fullName>
    </recommendedName>
</protein>
<name>RBFA_HELPS</name>